<evidence type="ECO:0000250" key="1">
    <source>
        <dbReference type="UniProtKB" id="Q6DC02"/>
    </source>
</evidence>
<evidence type="ECO:0000250" key="2">
    <source>
        <dbReference type="UniProtKB" id="Q8K0E1"/>
    </source>
</evidence>
<evidence type="ECO:0000250" key="3">
    <source>
        <dbReference type="UniProtKB" id="Q96SI1"/>
    </source>
</evidence>
<evidence type="ECO:0000256" key="4">
    <source>
        <dbReference type="SAM" id="MobiDB-lite"/>
    </source>
</evidence>
<keyword id="KW-0217">Developmental protein</keyword>
<keyword id="KW-0539">Nucleus</keyword>
<keyword id="KW-0597">Phosphoprotein</keyword>
<keyword id="KW-1185">Reference proteome</keyword>
<accession>Q0VD00</accession>
<reference key="1">
    <citation type="journal article" date="2005" name="BMC Genomics">
        <title>Characterization of 954 bovine full-CDS cDNA sequences.</title>
        <authorList>
            <person name="Harhay G.P."/>
            <person name="Sonstegard T.S."/>
            <person name="Keele J.W."/>
            <person name="Heaton M.P."/>
            <person name="Clawson M.L."/>
            <person name="Snelling W.M."/>
            <person name="Wiedmann R.T."/>
            <person name="Van Tassell C.P."/>
            <person name="Smith T.P.L."/>
        </authorList>
    </citation>
    <scope>NUCLEOTIDE SEQUENCE [LARGE SCALE MRNA]</scope>
</reference>
<reference key="2">
    <citation type="submission" date="2006-08" db="EMBL/GenBank/DDBJ databases">
        <authorList>
            <consortium name="NIH - Mammalian Gene Collection (MGC) project"/>
        </authorList>
    </citation>
    <scope>NUCLEOTIDE SEQUENCE [LARGE SCALE MRNA]</scope>
    <source>
        <strain>Hereford</strain>
        <tissue>Fetal skin</tissue>
    </source>
</reference>
<comment type="function">
    <text evidence="1 3">During embryonic development, interferes with neural crest formation (By similarity). Inhibits AP2 transcriptional activity by interaction with its activation domain (By similarity).</text>
</comment>
<comment type="subunit">
    <text evidence="3">Forms oligomers, predominantly homopentamers. Interacts with KCTD1, probably forming heteropentamers depending on its abundance in a cell-type dependent manner. Interacts with TFAP2A; this interaction inhibits TFAP2A transcriptional activation.</text>
</comment>
<comment type="subcellular location">
    <subcellularLocation>
        <location evidence="2">Nucleus</location>
    </subcellularLocation>
</comment>
<proteinExistence type="evidence at transcript level"/>
<gene>
    <name type="primary">KCTD15</name>
</gene>
<feature type="chain" id="PRO_0000281150" description="BTB/POZ domain-containing protein KCTD15">
    <location>
        <begin position="1"/>
        <end position="283"/>
    </location>
</feature>
<feature type="domain" description="BTB">
    <location>
        <begin position="56"/>
        <end position="126"/>
    </location>
</feature>
<feature type="region of interest" description="Disordered" evidence="4">
    <location>
        <begin position="1"/>
        <end position="33"/>
    </location>
</feature>
<feature type="modified residue" description="Phosphoserine" evidence="3">
    <location>
        <position position="31"/>
    </location>
</feature>
<feature type="modified residue" description="Phosphoserine" evidence="3">
    <location>
        <position position="35"/>
    </location>
</feature>
<feature type="modified residue" description="Phosphoserine" evidence="3">
    <location>
        <position position="38"/>
    </location>
</feature>
<sequence>MPHRKERPSGSSLHAHGSTGTAEGGSMSRLSLTRSPVSPLAAQGIPLPAQLTKSNAPVHIDVGGHMYTSSLATLTKYPDSRISRLFNGTEPIVLDSLKQHYFIDRDGEIFRYVLSFLRTSKLLLPDDFKDFSLLYEEARYYQLQPMVRELERWQQEQEQRRRSRACDCLVVRVTPDLGERIALSGEKALIEEVFPETGDVMCNSVNAGWNQDPTHVIRFPLNGYCRLNSVQVLERLFQRGFSVAASCGGGVDSSQFSEYVLCREERRPQPTPTAVRIKQEPLD</sequence>
<organism>
    <name type="scientific">Bos taurus</name>
    <name type="common">Bovine</name>
    <dbReference type="NCBI Taxonomy" id="9913"/>
    <lineage>
        <taxon>Eukaryota</taxon>
        <taxon>Metazoa</taxon>
        <taxon>Chordata</taxon>
        <taxon>Craniata</taxon>
        <taxon>Vertebrata</taxon>
        <taxon>Euteleostomi</taxon>
        <taxon>Mammalia</taxon>
        <taxon>Eutheria</taxon>
        <taxon>Laurasiatheria</taxon>
        <taxon>Artiodactyla</taxon>
        <taxon>Ruminantia</taxon>
        <taxon>Pecora</taxon>
        <taxon>Bovidae</taxon>
        <taxon>Bovinae</taxon>
        <taxon>Bos</taxon>
    </lineage>
</organism>
<protein>
    <recommendedName>
        <fullName>BTB/POZ domain-containing protein KCTD15</fullName>
    </recommendedName>
    <alternativeName>
        <fullName>Potassium channel tetramerization domain-containing protein 15</fullName>
    </alternativeName>
</protein>
<dbReference type="EMBL" id="BT029851">
    <property type="protein sequence ID" value="ABM06106.1"/>
    <property type="molecule type" value="mRNA"/>
</dbReference>
<dbReference type="EMBL" id="BC119910">
    <property type="protein sequence ID" value="AAI19911.1"/>
    <property type="molecule type" value="mRNA"/>
</dbReference>
<dbReference type="RefSeq" id="NP_001069036.1">
    <property type="nucleotide sequence ID" value="NM_001075568.1"/>
</dbReference>
<dbReference type="RefSeq" id="XP_005218995.1">
    <property type="nucleotide sequence ID" value="XM_005218938.4"/>
</dbReference>
<dbReference type="RefSeq" id="XP_005218996.1">
    <property type="nucleotide sequence ID" value="XM_005218939.5"/>
</dbReference>
<dbReference type="RefSeq" id="XP_015313543.1">
    <property type="nucleotide sequence ID" value="XM_015458057.1"/>
</dbReference>
<dbReference type="SMR" id="Q0VD00"/>
<dbReference type="FunCoup" id="Q0VD00">
    <property type="interactions" value="724"/>
</dbReference>
<dbReference type="STRING" id="9913.ENSBTAP00000023874"/>
<dbReference type="PaxDb" id="9913-ENSBTAP00000023874"/>
<dbReference type="Ensembl" id="ENSBTAT00000023874.5">
    <property type="protein sequence ID" value="ENSBTAP00000023874.3"/>
    <property type="gene ID" value="ENSBTAG00000017956.5"/>
</dbReference>
<dbReference type="GeneID" id="512578"/>
<dbReference type="KEGG" id="bta:512578"/>
<dbReference type="CTD" id="79047"/>
<dbReference type="VEuPathDB" id="HostDB:ENSBTAG00000017956"/>
<dbReference type="VGNC" id="VGNC:30504">
    <property type="gene designation" value="KCTD15"/>
</dbReference>
<dbReference type="eggNOG" id="KOG2723">
    <property type="taxonomic scope" value="Eukaryota"/>
</dbReference>
<dbReference type="GeneTree" id="ENSGT00940000159496"/>
<dbReference type="HOGENOM" id="CLU_061268_1_0_1"/>
<dbReference type="InParanoid" id="Q0VD00"/>
<dbReference type="OMA" id="FCDCIAV"/>
<dbReference type="OrthoDB" id="2414723at2759"/>
<dbReference type="TreeFam" id="TF315332"/>
<dbReference type="Proteomes" id="UP000009136">
    <property type="component" value="Chromosome 18"/>
</dbReference>
<dbReference type="Bgee" id="ENSBTAG00000017956">
    <property type="expression patterns" value="Expressed in myometrium and 104 other cell types or tissues"/>
</dbReference>
<dbReference type="GO" id="GO:0005634">
    <property type="term" value="C:nucleus"/>
    <property type="evidence" value="ECO:0007669"/>
    <property type="project" value="UniProtKB-SubCell"/>
</dbReference>
<dbReference type="GO" id="GO:0042802">
    <property type="term" value="F:identical protein binding"/>
    <property type="evidence" value="ECO:0007669"/>
    <property type="project" value="Ensembl"/>
</dbReference>
<dbReference type="GO" id="GO:0003714">
    <property type="term" value="F:transcription corepressor activity"/>
    <property type="evidence" value="ECO:0000318"/>
    <property type="project" value="GO_Central"/>
</dbReference>
<dbReference type="GO" id="GO:0045892">
    <property type="term" value="P:negative regulation of DNA-templated transcription"/>
    <property type="evidence" value="ECO:0000318"/>
    <property type="project" value="GO_Central"/>
</dbReference>
<dbReference type="GO" id="GO:0051260">
    <property type="term" value="P:protein homooligomerization"/>
    <property type="evidence" value="ECO:0007669"/>
    <property type="project" value="InterPro"/>
</dbReference>
<dbReference type="CDD" id="cd18388">
    <property type="entry name" value="BTB_POZ_KCTD15"/>
    <property type="match status" value="1"/>
</dbReference>
<dbReference type="FunFam" id="3.30.710.10:FF:000003">
    <property type="entry name" value="BTB/POZ domain-containing protein KCTD6 isoform X2"/>
    <property type="match status" value="1"/>
</dbReference>
<dbReference type="Gene3D" id="3.30.710.10">
    <property type="entry name" value="Potassium Channel Kv1.1, Chain A"/>
    <property type="match status" value="1"/>
</dbReference>
<dbReference type="InterPro" id="IPR000210">
    <property type="entry name" value="BTB/POZ_dom"/>
</dbReference>
<dbReference type="InterPro" id="IPR048595">
    <property type="entry name" value="KCTD1-15-like_C"/>
</dbReference>
<dbReference type="InterPro" id="IPR045904">
    <property type="entry name" value="KCTD15_T1-type_BTB"/>
</dbReference>
<dbReference type="InterPro" id="IPR011333">
    <property type="entry name" value="SKP1/BTB/POZ_sf"/>
</dbReference>
<dbReference type="InterPro" id="IPR003131">
    <property type="entry name" value="T1-type_BTB"/>
</dbReference>
<dbReference type="PANTHER" id="PTHR14499:SF27">
    <property type="entry name" value="BTB_POZ DOMAIN-CONTAINING PROTEIN KCTD15"/>
    <property type="match status" value="1"/>
</dbReference>
<dbReference type="PANTHER" id="PTHR14499">
    <property type="entry name" value="POTASSIUM CHANNEL TETRAMERIZATION DOMAIN-CONTAINING"/>
    <property type="match status" value="1"/>
</dbReference>
<dbReference type="Pfam" id="PF02214">
    <property type="entry name" value="BTB_2"/>
    <property type="match status" value="1"/>
</dbReference>
<dbReference type="Pfam" id="PF20871">
    <property type="entry name" value="KCTD1-15_CTD"/>
    <property type="match status" value="1"/>
</dbReference>
<dbReference type="SMART" id="SM00225">
    <property type="entry name" value="BTB"/>
    <property type="match status" value="1"/>
</dbReference>
<dbReference type="SUPFAM" id="SSF54695">
    <property type="entry name" value="POZ domain"/>
    <property type="match status" value="1"/>
</dbReference>
<name>KCD15_BOVIN</name>